<organism>
    <name type="scientific">Chlorobium limicola (strain DSM 245 / NBRC 103803 / 6330)</name>
    <dbReference type="NCBI Taxonomy" id="290315"/>
    <lineage>
        <taxon>Bacteria</taxon>
        <taxon>Pseudomonadati</taxon>
        <taxon>Chlorobiota</taxon>
        <taxon>Chlorobiia</taxon>
        <taxon>Chlorobiales</taxon>
        <taxon>Chlorobiaceae</taxon>
        <taxon>Chlorobium/Pelodictyon group</taxon>
        <taxon>Chlorobium</taxon>
    </lineage>
</organism>
<name>RL27_CHLL2</name>
<protein>
    <recommendedName>
        <fullName evidence="1">Large ribosomal subunit protein bL27</fullName>
    </recommendedName>
    <alternativeName>
        <fullName evidence="3">50S ribosomal protein L27</fullName>
    </alternativeName>
</protein>
<proteinExistence type="inferred from homology"/>
<keyword id="KW-0687">Ribonucleoprotein</keyword>
<keyword id="KW-0689">Ribosomal protein</keyword>
<sequence length="84" mass="8789">MAHKKGGGSTKNGRDSNPKYLGVKAAGGSTVSAGTIILRQRGTVIKPGNNAGIGRDHTIFSLIDGVVTFRNGRNNKKQVDILPC</sequence>
<evidence type="ECO:0000255" key="1">
    <source>
        <dbReference type="HAMAP-Rule" id="MF_00539"/>
    </source>
</evidence>
<evidence type="ECO:0000256" key="2">
    <source>
        <dbReference type="SAM" id="MobiDB-lite"/>
    </source>
</evidence>
<evidence type="ECO:0000305" key="3"/>
<gene>
    <name evidence="1" type="primary">rpmA</name>
    <name type="ordered locus">Clim_1712</name>
</gene>
<feature type="chain" id="PRO_1000128713" description="Large ribosomal subunit protein bL27">
    <location>
        <begin position="1"/>
        <end position="84"/>
    </location>
</feature>
<feature type="region of interest" description="Disordered" evidence="2">
    <location>
        <begin position="1"/>
        <end position="21"/>
    </location>
</feature>
<reference key="1">
    <citation type="submission" date="2008-05" db="EMBL/GenBank/DDBJ databases">
        <title>Complete sequence of Chlorobium limicola DSM 245.</title>
        <authorList>
            <consortium name="US DOE Joint Genome Institute"/>
            <person name="Lucas S."/>
            <person name="Copeland A."/>
            <person name="Lapidus A."/>
            <person name="Glavina del Rio T."/>
            <person name="Dalin E."/>
            <person name="Tice H."/>
            <person name="Bruce D."/>
            <person name="Goodwin L."/>
            <person name="Pitluck S."/>
            <person name="Schmutz J."/>
            <person name="Larimer F."/>
            <person name="Land M."/>
            <person name="Hauser L."/>
            <person name="Kyrpides N."/>
            <person name="Ovchinnikova G."/>
            <person name="Zhao F."/>
            <person name="Li T."/>
            <person name="Liu Z."/>
            <person name="Overmann J."/>
            <person name="Bryant D.A."/>
            <person name="Richardson P."/>
        </authorList>
    </citation>
    <scope>NUCLEOTIDE SEQUENCE [LARGE SCALE GENOMIC DNA]</scope>
    <source>
        <strain>DSM 245 / NBRC 103803 / 6330</strain>
    </source>
</reference>
<comment type="similarity">
    <text evidence="1">Belongs to the bacterial ribosomal protein bL27 family.</text>
</comment>
<accession>B3EEE4</accession>
<dbReference type="EMBL" id="CP001097">
    <property type="protein sequence ID" value="ACD90754.1"/>
    <property type="molecule type" value="Genomic_DNA"/>
</dbReference>
<dbReference type="RefSeq" id="WP_012466627.1">
    <property type="nucleotide sequence ID" value="NC_010803.1"/>
</dbReference>
<dbReference type="SMR" id="B3EEE4"/>
<dbReference type="STRING" id="290315.Clim_1712"/>
<dbReference type="KEGG" id="cli:Clim_1712"/>
<dbReference type="eggNOG" id="COG0211">
    <property type="taxonomic scope" value="Bacteria"/>
</dbReference>
<dbReference type="HOGENOM" id="CLU_095424_4_0_10"/>
<dbReference type="OrthoDB" id="9803474at2"/>
<dbReference type="Proteomes" id="UP000008841">
    <property type="component" value="Chromosome"/>
</dbReference>
<dbReference type="GO" id="GO:0022625">
    <property type="term" value="C:cytosolic large ribosomal subunit"/>
    <property type="evidence" value="ECO:0007669"/>
    <property type="project" value="TreeGrafter"/>
</dbReference>
<dbReference type="GO" id="GO:0003735">
    <property type="term" value="F:structural constituent of ribosome"/>
    <property type="evidence" value="ECO:0007669"/>
    <property type="project" value="InterPro"/>
</dbReference>
<dbReference type="GO" id="GO:0006412">
    <property type="term" value="P:translation"/>
    <property type="evidence" value="ECO:0007669"/>
    <property type="project" value="UniProtKB-UniRule"/>
</dbReference>
<dbReference type="FunFam" id="2.40.50.100:FF:000060">
    <property type="entry name" value="Apicoplast ribosomal protein L27"/>
    <property type="match status" value="1"/>
</dbReference>
<dbReference type="Gene3D" id="2.40.50.100">
    <property type="match status" value="1"/>
</dbReference>
<dbReference type="HAMAP" id="MF_00539">
    <property type="entry name" value="Ribosomal_bL27"/>
    <property type="match status" value="1"/>
</dbReference>
<dbReference type="InterPro" id="IPR001684">
    <property type="entry name" value="Ribosomal_bL27"/>
</dbReference>
<dbReference type="InterPro" id="IPR018261">
    <property type="entry name" value="Ribosomal_bL27_CS"/>
</dbReference>
<dbReference type="NCBIfam" id="TIGR00062">
    <property type="entry name" value="L27"/>
    <property type="match status" value="1"/>
</dbReference>
<dbReference type="PANTHER" id="PTHR15893:SF0">
    <property type="entry name" value="LARGE RIBOSOMAL SUBUNIT PROTEIN BL27M"/>
    <property type="match status" value="1"/>
</dbReference>
<dbReference type="PANTHER" id="PTHR15893">
    <property type="entry name" value="RIBOSOMAL PROTEIN L27"/>
    <property type="match status" value="1"/>
</dbReference>
<dbReference type="Pfam" id="PF01016">
    <property type="entry name" value="Ribosomal_L27"/>
    <property type="match status" value="1"/>
</dbReference>
<dbReference type="PRINTS" id="PR00063">
    <property type="entry name" value="RIBOSOMALL27"/>
</dbReference>
<dbReference type="SUPFAM" id="SSF110324">
    <property type="entry name" value="Ribosomal L27 protein-like"/>
    <property type="match status" value="1"/>
</dbReference>
<dbReference type="PROSITE" id="PS00831">
    <property type="entry name" value="RIBOSOMAL_L27"/>
    <property type="match status" value="1"/>
</dbReference>